<protein>
    <recommendedName>
        <fullName>Unknown protein from spot 415 of 2D-PAGE of etiolated coleoptile</fullName>
    </recommendedName>
</protein>
<name>UC36_MAIZE</name>
<organism>
    <name type="scientific">Zea mays</name>
    <name type="common">Maize</name>
    <dbReference type="NCBI Taxonomy" id="4577"/>
    <lineage>
        <taxon>Eukaryota</taxon>
        <taxon>Viridiplantae</taxon>
        <taxon>Streptophyta</taxon>
        <taxon>Embryophyta</taxon>
        <taxon>Tracheophyta</taxon>
        <taxon>Spermatophyta</taxon>
        <taxon>Magnoliopsida</taxon>
        <taxon>Liliopsida</taxon>
        <taxon>Poales</taxon>
        <taxon>Poaceae</taxon>
        <taxon>PACMAD clade</taxon>
        <taxon>Panicoideae</taxon>
        <taxon>Andropogonodae</taxon>
        <taxon>Andropogoneae</taxon>
        <taxon>Tripsacinae</taxon>
        <taxon>Zea</taxon>
    </lineage>
</organism>
<feature type="chain" id="PRO_0000055531" description="Unknown protein from spot 415 of 2D-PAGE of etiolated coleoptile">
    <location>
        <begin position="1" status="less than"/>
        <end position="52" status="greater than"/>
    </location>
</feature>
<feature type="non-consecutive residues" evidence="1">
    <location>
        <begin position="8"/>
        <end position="9"/>
    </location>
</feature>
<feature type="non-consecutive residues" evidence="1">
    <location>
        <begin position="17"/>
        <end position="18"/>
    </location>
</feature>
<feature type="non-consecutive residues" evidence="1">
    <location>
        <begin position="24"/>
        <end position="25"/>
    </location>
</feature>
<feature type="non-consecutive residues" evidence="1">
    <location>
        <begin position="38"/>
        <end position="39"/>
    </location>
</feature>
<feature type="non-consecutive residues" evidence="1">
    <location>
        <begin position="45"/>
        <end position="46"/>
    </location>
</feature>
<feature type="non-terminal residue">
    <location>
        <position position="1"/>
    </location>
</feature>
<feature type="non-terminal residue">
    <location>
        <position position="52"/>
    </location>
</feature>
<proteinExistence type="evidence at protein level"/>
<keyword id="KW-0903">Direct protein sequencing</keyword>
<keyword id="KW-1185">Reference proteome</keyword>
<reference key="1">
    <citation type="journal article" date="1996" name="Theor. Appl. Genet.">
        <title>The maize two dimensional gel protein database: towards an integrated genome analysis program.</title>
        <authorList>
            <person name="Touzet P."/>
            <person name="Riccardi F."/>
            <person name="Morin C."/>
            <person name="Damerval C."/>
            <person name="Huet J.-C."/>
            <person name="Pernollet J.-C."/>
            <person name="Zivy M."/>
            <person name="de Vienne D."/>
        </authorList>
        <dbReference type="AGRICOLA" id="IND20551642"/>
    </citation>
    <scope>PROTEIN SEQUENCE</scope>
    <source>
        <tissue>Coleoptile</tissue>
    </source>
</reference>
<evidence type="ECO:0000305" key="1"/>
<dbReference type="MaizeGDB" id="123967"/>
<dbReference type="InParanoid" id="P80642"/>
<dbReference type="Proteomes" id="UP000007305">
    <property type="component" value="Unplaced"/>
</dbReference>
<sequence>AKNYPTVSGSDHLRQVFXMGLSDQALLSDPVFRPLVEKXFFDDYAXRSGFEG</sequence>
<comment type="miscellaneous">
    <text>On the 2D-gel the determined pI of this unknown protein is: 6.0, its MW is: 27.2 kDa.</text>
</comment>
<comment type="caution">
    <text evidence="1">The order of the peptides shown is unknown.</text>
</comment>
<accession>P80642</accession>